<name>GAUT9_ARATH</name>
<comment type="function">
    <text evidence="1">May be involved in pectin synthesis.</text>
</comment>
<comment type="pathway">
    <text>Glycan metabolism; pectin biosynthesis.</text>
</comment>
<comment type="subcellular location">
    <subcellularLocation>
        <location evidence="1">Golgi apparatus membrane</location>
        <topology evidence="1">Single-pass type II membrane protein</topology>
    </subcellularLocation>
</comment>
<comment type="tissue specificity">
    <text evidence="3">Expressed in roots, inflorescences, siliques, leaves and stems.</text>
</comment>
<comment type="similarity">
    <text evidence="4">Belongs to the glycosyltransferase 8 family.</text>
</comment>
<reference key="1">
    <citation type="journal article" date="2000" name="Nature">
        <title>Sequence and analysis of chromosome 3 of the plant Arabidopsis thaliana.</title>
        <authorList>
            <person name="Salanoubat M."/>
            <person name="Lemcke K."/>
            <person name="Rieger M."/>
            <person name="Ansorge W."/>
            <person name="Unseld M."/>
            <person name="Fartmann B."/>
            <person name="Valle G."/>
            <person name="Bloecker H."/>
            <person name="Perez-Alonso M."/>
            <person name="Obermaier B."/>
            <person name="Delseny M."/>
            <person name="Boutry M."/>
            <person name="Grivell L.A."/>
            <person name="Mache R."/>
            <person name="Puigdomenech P."/>
            <person name="De Simone V."/>
            <person name="Choisne N."/>
            <person name="Artiguenave F."/>
            <person name="Robert C."/>
            <person name="Brottier P."/>
            <person name="Wincker P."/>
            <person name="Cattolico L."/>
            <person name="Weissenbach J."/>
            <person name="Saurin W."/>
            <person name="Quetier F."/>
            <person name="Schaefer M."/>
            <person name="Mueller-Auer S."/>
            <person name="Gabel C."/>
            <person name="Fuchs M."/>
            <person name="Benes V."/>
            <person name="Wurmbach E."/>
            <person name="Drzonek H."/>
            <person name="Erfle H."/>
            <person name="Jordan N."/>
            <person name="Bangert S."/>
            <person name="Wiedelmann R."/>
            <person name="Kranz H."/>
            <person name="Voss H."/>
            <person name="Holland R."/>
            <person name="Brandt P."/>
            <person name="Nyakatura G."/>
            <person name="Vezzi A."/>
            <person name="D'Angelo M."/>
            <person name="Pallavicini A."/>
            <person name="Toppo S."/>
            <person name="Simionati B."/>
            <person name="Conrad A."/>
            <person name="Hornischer K."/>
            <person name="Kauer G."/>
            <person name="Loehnert T.-H."/>
            <person name="Nordsiek G."/>
            <person name="Reichelt J."/>
            <person name="Scharfe M."/>
            <person name="Schoen O."/>
            <person name="Bargues M."/>
            <person name="Terol J."/>
            <person name="Climent J."/>
            <person name="Navarro P."/>
            <person name="Collado C."/>
            <person name="Perez-Perez A."/>
            <person name="Ottenwaelder B."/>
            <person name="Duchemin D."/>
            <person name="Cooke R."/>
            <person name="Laudie M."/>
            <person name="Berger-Llauro C."/>
            <person name="Purnelle B."/>
            <person name="Masuy D."/>
            <person name="de Haan M."/>
            <person name="Maarse A.C."/>
            <person name="Alcaraz J.-P."/>
            <person name="Cottet A."/>
            <person name="Casacuberta E."/>
            <person name="Monfort A."/>
            <person name="Argiriou A."/>
            <person name="Flores M."/>
            <person name="Liguori R."/>
            <person name="Vitale D."/>
            <person name="Mannhaupt G."/>
            <person name="Haase D."/>
            <person name="Schoof H."/>
            <person name="Rudd S."/>
            <person name="Zaccaria P."/>
            <person name="Mewes H.-W."/>
            <person name="Mayer K.F.X."/>
            <person name="Kaul S."/>
            <person name="Town C.D."/>
            <person name="Koo H.L."/>
            <person name="Tallon L.J."/>
            <person name="Jenkins J."/>
            <person name="Rooney T."/>
            <person name="Rizzo M."/>
            <person name="Walts A."/>
            <person name="Utterback T."/>
            <person name="Fujii C.Y."/>
            <person name="Shea T.P."/>
            <person name="Creasy T.H."/>
            <person name="Haas B."/>
            <person name="Maiti R."/>
            <person name="Wu D."/>
            <person name="Peterson J."/>
            <person name="Van Aken S."/>
            <person name="Pai G."/>
            <person name="Militscher J."/>
            <person name="Sellers P."/>
            <person name="Gill J.E."/>
            <person name="Feldblyum T.V."/>
            <person name="Preuss D."/>
            <person name="Lin X."/>
            <person name="Nierman W.C."/>
            <person name="Salzberg S.L."/>
            <person name="White O."/>
            <person name="Venter J.C."/>
            <person name="Fraser C.M."/>
            <person name="Kaneko T."/>
            <person name="Nakamura Y."/>
            <person name="Sato S."/>
            <person name="Kato T."/>
            <person name="Asamizu E."/>
            <person name="Sasamoto S."/>
            <person name="Kimura T."/>
            <person name="Idesawa K."/>
            <person name="Kawashima K."/>
            <person name="Kishida Y."/>
            <person name="Kiyokawa C."/>
            <person name="Kohara M."/>
            <person name="Matsumoto M."/>
            <person name="Matsuno A."/>
            <person name="Muraki A."/>
            <person name="Nakayama S."/>
            <person name="Nakazaki N."/>
            <person name="Shinpo S."/>
            <person name="Takeuchi C."/>
            <person name="Wada T."/>
            <person name="Watanabe A."/>
            <person name="Yamada M."/>
            <person name="Yasuda M."/>
            <person name="Tabata S."/>
        </authorList>
    </citation>
    <scope>NUCLEOTIDE SEQUENCE [LARGE SCALE GENOMIC DNA]</scope>
    <source>
        <strain>cv. Columbia</strain>
    </source>
</reference>
<reference key="2">
    <citation type="journal article" date="2017" name="Plant J.">
        <title>Araport11: a complete reannotation of the Arabidopsis thaliana reference genome.</title>
        <authorList>
            <person name="Cheng C.Y."/>
            <person name="Krishnakumar V."/>
            <person name="Chan A.P."/>
            <person name="Thibaud-Nissen F."/>
            <person name="Schobel S."/>
            <person name="Town C.D."/>
        </authorList>
    </citation>
    <scope>GENOME REANNOTATION</scope>
    <source>
        <strain>cv. Columbia</strain>
    </source>
</reference>
<reference key="3">
    <citation type="journal article" date="2003" name="Science">
        <title>Empirical analysis of transcriptional activity in the Arabidopsis genome.</title>
        <authorList>
            <person name="Yamada K."/>
            <person name="Lim J."/>
            <person name="Dale J.M."/>
            <person name="Chen H."/>
            <person name="Shinn P."/>
            <person name="Palm C.J."/>
            <person name="Southwick A.M."/>
            <person name="Wu H.C."/>
            <person name="Kim C.J."/>
            <person name="Nguyen M."/>
            <person name="Pham P.K."/>
            <person name="Cheuk R.F."/>
            <person name="Karlin-Newmann G."/>
            <person name="Liu S.X."/>
            <person name="Lam B."/>
            <person name="Sakano H."/>
            <person name="Wu T."/>
            <person name="Yu G."/>
            <person name="Miranda M."/>
            <person name="Quach H.L."/>
            <person name="Tripp M."/>
            <person name="Chang C.H."/>
            <person name="Lee J.M."/>
            <person name="Toriumi M.J."/>
            <person name="Chan M.M."/>
            <person name="Tang C.C."/>
            <person name="Onodera C.S."/>
            <person name="Deng J.M."/>
            <person name="Akiyama K."/>
            <person name="Ansari Y."/>
            <person name="Arakawa T."/>
            <person name="Banh J."/>
            <person name="Banno F."/>
            <person name="Bowser L."/>
            <person name="Brooks S.Y."/>
            <person name="Carninci P."/>
            <person name="Chao Q."/>
            <person name="Choy N."/>
            <person name="Enju A."/>
            <person name="Goldsmith A.D."/>
            <person name="Gurjal M."/>
            <person name="Hansen N.F."/>
            <person name="Hayashizaki Y."/>
            <person name="Johnson-Hopson C."/>
            <person name="Hsuan V.W."/>
            <person name="Iida K."/>
            <person name="Karnes M."/>
            <person name="Khan S."/>
            <person name="Koesema E."/>
            <person name="Ishida J."/>
            <person name="Jiang P.X."/>
            <person name="Jones T."/>
            <person name="Kawai J."/>
            <person name="Kamiya A."/>
            <person name="Meyers C."/>
            <person name="Nakajima M."/>
            <person name="Narusaka M."/>
            <person name="Seki M."/>
            <person name="Sakurai T."/>
            <person name="Satou M."/>
            <person name="Tamse R."/>
            <person name="Vaysberg M."/>
            <person name="Wallender E.K."/>
            <person name="Wong C."/>
            <person name="Yamamura Y."/>
            <person name="Yuan S."/>
            <person name="Shinozaki K."/>
            <person name="Davis R.W."/>
            <person name="Theologis A."/>
            <person name="Ecker J.R."/>
        </authorList>
    </citation>
    <scope>NUCLEOTIDE SEQUENCE [LARGE SCALE MRNA]</scope>
    <source>
        <strain>cv. Columbia</strain>
    </source>
</reference>
<reference key="4">
    <citation type="submission" date="2002-03" db="EMBL/GenBank/DDBJ databases">
        <title>Full-length cDNA from Arabidopsis thaliana.</title>
        <authorList>
            <person name="Brover V.V."/>
            <person name="Troukhan M.E."/>
            <person name="Alexandrov N.A."/>
            <person name="Lu Y.-P."/>
            <person name="Flavell R.B."/>
            <person name="Feldmann K.A."/>
        </authorList>
    </citation>
    <scope>NUCLEOTIDE SEQUENCE [LARGE SCALE MRNA]</scope>
</reference>
<reference key="5">
    <citation type="journal article" date="2006" name="Proc. Natl. Acad. Sci. U.S.A.">
        <title>Functional identification of an Arabidopsis pectin biosynthetic homogalacturonan galacturonosyltransferase.</title>
        <authorList>
            <person name="Sterling J.D."/>
            <person name="Atmodjo M.A."/>
            <person name="Inwood S.E."/>
            <person name="Kumar Kolli V.S."/>
            <person name="Quigley H.F."/>
            <person name="Hahn M.G."/>
            <person name="Mohnen D."/>
        </authorList>
    </citation>
    <scope>GENE FAMILY</scope>
    <scope>NOMENCLATURE</scope>
</reference>
<reference key="6">
    <citation type="journal article" date="2009" name="Mol. Plant">
        <title>Arabidopsis thaliana T-DNA mutants implicate GAUT genes in the biosynthesis of pectin and xylan in cell walls and seed testa.</title>
        <authorList>
            <person name="Caffall K.H."/>
            <person name="Pattathil S."/>
            <person name="Phillips S.E."/>
            <person name="Hahn M.G."/>
            <person name="Mohnen D."/>
        </authorList>
    </citation>
    <scope>TISSUE SPECIFICITY</scope>
</reference>
<dbReference type="EC" id="2.4.1.-"/>
<dbReference type="EMBL" id="AC068900">
    <property type="protein sequence ID" value="AAG12603.1"/>
    <property type="molecule type" value="Genomic_DNA"/>
</dbReference>
<dbReference type="EMBL" id="CP002686">
    <property type="protein sequence ID" value="AEE73795.1"/>
    <property type="molecule type" value="Genomic_DNA"/>
</dbReference>
<dbReference type="EMBL" id="AY078957">
    <property type="protein sequence ID" value="AAL84957.1"/>
    <property type="molecule type" value="mRNA"/>
</dbReference>
<dbReference type="EMBL" id="BT004530">
    <property type="protein sequence ID" value="AAO42776.1"/>
    <property type="molecule type" value="mRNA"/>
</dbReference>
<dbReference type="EMBL" id="AY084528">
    <property type="protein sequence ID" value="AAM61096.1"/>
    <property type="molecule type" value="mRNA"/>
</dbReference>
<dbReference type="RefSeq" id="NP_566170.1">
    <property type="nucleotide sequence ID" value="NM_111102.2"/>
</dbReference>
<dbReference type="FunCoup" id="Q9FWA4">
    <property type="interactions" value="903"/>
</dbReference>
<dbReference type="STRING" id="3702.Q9FWA4"/>
<dbReference type="CAZy" id="GT8">
    <property type="family name" value="Glycosyltransferase Family 8"/>
</dbReference>
<dbReference type="GlyCosmos" id="Q9FWA4">
    <property type="glycosylation" value="4 sites, No reported glycans"/>
</dbReference>
<dbReference type="GlyGen" id="Q9FWA4">
    <property type="glycosylation" value="4 sites"/>
</dbReference>
<dbReference type="iPTMnet" id="Q9FWA4"/>
<dbReference type="PaxDb" id="3702-AT3G02350.1"/>
<dbReference type="ProteomicsDB" id="222163"/>
<dbReference type="EnsemblPlants" id="AT3G02350.1">
    <property type="protein sequence ID" value="AT3G02350.1"/>
    <property type="gene ID" value="AT3G02350"/>
</dbReference>
<dbReference type="GeneID" id="820474"/>
<dbReference type="Gramene" id="AT3G02350.1">
    <property type="protein sequence ID" value="AT3G02350.1"/>
    <property type="gene ID" value="AT3G02350"/>
</dbReference>
<dbReference type="KEGG" id="ath:AT3G02350"/>
<dbReference type="Araport" id="AT3G02350"/>
<dbReference type="TAIR" id="AT3G02350">
    <property type="gene designation" value="GAUT9"/>
</dbReference>
<dbReference type="eggNOG" id="ENOG502QPP9">
    <property type="taxonomic scope" value="Eukaryota"/>
</dbReference>
<dbReference type="HOGENOM" id="CLU_010770_5_0_1"/>
<dbReference type="InParanoid" id="Q9FWA4"/>
<dbReference type="OMA" id="SMGNAYM"/>
<dbReference type="OrthoDB" id="411524at2759"/>
<dbReference type="PhylomeDB" id="Q9FWA4"/>
<dbReference type="UniPathway" id="UPA00845"/>
<dbReference type="CD-CODE" id="4299E36E">
    <property type="entry name" value="Nucleolus"/>
</dbReference>
<dbReference type="PRO" id="PR:Q9FWA4"/>
<dbReference type="Proteomes" id="UP000006548">
    <property type="component" value="Chromosome 3"/>
</dbReference>
<dbReference type="ExpressionAtlas" id="Q9FWA4">
    <property type="expression patterns" value="baseline and differential"/>
</dbReference>
<dbReference type="GO" id="GO:0005768">
    <property type="term" value="C:endosome"/>
    <property type="evidence" value="ECO:0007005"/>
    <property type="project" value="TAIR"/>
</dbReference>
<dbReference type="GO" id="GO:0005794">
    <property type="term" value="C:Golgi apparatus"/>
    <property type="evidence" value="ECO:0007005"/>
    <property type="project" value="TAIR"/>
</dbReference>
<dbReference type="GO" id="GO:0000139">
    <property type="term" value="C:Golgi membrane"/>
    <property type="evidence" value="ECO:0007669"/>
    <property type="project" value="UniProtKB-SubCell"/>
</dbReference>
<dbReference type="GO" id="GO:0000138">
    <property type="term" value="C:Golgi trans cisterna"/>
    <property type="evidence" value="ECO:0007005"/>
    <property type="project" value="TAIR"/>
</dbReference>
<dbReference type="GO" id="GO:0005802">
    <property type="term" value="C:trans-Golgi network"/>
    <property type="evidence" value="ECO:0007005"/>
    <property type="project" value="TAIR"/>
</dbReference>
<dbReference type="GO" id="GO:0047262">
    <property type="term" value="F:polygalacturonate 4-alpha-galacturonosyltransferase activity"/>
    <property type="evidence" value="ECO:0000250"/>
    <property type="project" value="TAIR"/>
</dbReference>
<dbReference type="GO" id="GO:0045489">
    <property type="term" value="P:pectin biosynthetic process"/>
    <property type="evidence" value="ECO:0007669"/>
    <property type="project" value="UniProtKB-UniPathway"/>
</dbReference>
<dbReference type="CDD" id="cd06429">
    <property type="entry name" value="GT8_like_1"/>
    <property type="match status" value="1"/>
</dbReference>
<dbReference type="Gene3D" id="3.90.550.10">
    <property type="entry name" value="Spore Coat Polysaccharide Biosynthesis Protein SpsA, Chain A"/>
    <property type="match status" value="1"/>
</dbReference>
<dbReference type="InterPro" id="IPR029993">
    <property type="entry name" value="GAUT"/>
</dbReference>
<dbReference type="InterPro" id="IPR002495">
    <property type="entry name" value="Glyco_trans_8"/>
</dbReference>
<dbReference type="InterPro" id="IPR029044">
    <property type="entry name" value="Nucleotide-diphossugar_trans"/>
</dbReference>
<dbReference type="PANTHER" id="PTHR32116">
    <property type="entry name" value="GALACTURONOSYLTRANSFERASE 4-RELATED"/>
    <property type="match status" value="1"/>
</dbReference>
<dbReference type="PANTHER" id="PTHR32116:SF61">
    <property type="entry name" value="GALACTURONOSYLTRANSFERASE 9-RELATED"/>
    <property type="match status" value="1"/>
</dbReference>
<dbReference type="Pfam" id="PF01501">
    <property type="entry name" value="Glyco_transf_8"/>
    <property type="match status" value="1"/>
</dbReference>
<dbReference type="SUPFAM" id="SSF53448">
    <property type="entry name" value="Nucleotide-diphospho-sugar transferases"/>
    <property type="match status" value="1"/>
</dbReference>
<protein>
    <recommendedName>
        <fullName>Probable galacturonosyltransferase 9</fullName>
        <ecNumber>2.4.1.-</ecNumber>
    </recommendedName>
</protein>
<sequence>MAVAFRGGRGGVGSGQSTGLRSFFSYRIFISALFSFLFLATFSVVLNSSRHQPHQDHTLPSMGNAYMQRTFLALQSDPLKTRLDLIHKQAIDHLTLVNAYAAYARKLKLDASKQLKLFEDLAINFSDLQSKPGLKSAVSDNGNALEEDSFRQLEKEVKDKVKTARMMIVESKESYDTQLKIQKLKDTIFAVQEQLTKAKKNGAVASLISAKSVPKSLHCLAMRLVGERISNPEKYKDAPPDPAAEDPTLYHYAIFSDNVIAVSVVVRSVVMNAEEPWKHVFHVVTDRMNLAAMKVWFKMRPLDRGAHVEIKSVEDFKFLNSSYAPVLRQLESAKLQKFYFENQAENATKDSHNLKFKNPKYLSMLNHLRFYLPEMYPKLNKILFLDDDVVVQKDVTGLWKINLDGKVNGAVETCFGSFHRYGQYLNFSHPLIKENFNPSACAWAFGMNIFDLNAWRREKCTDQYHYWQNLNEDRTLWKLGTLPPGLITFYSKTKSLDKSWHVLGLGYNPGVSMDEIRNAGVIHYNGNMKPWLDIAMNQYKSLWTKYVDNEMEFVQMCNFGL</sequence>
<proteinExistence type="evidence at transcript level"/>
<accession>Q9FWA4</accession>
<keyword id="KW-0325">Glycoprotein</keyword>
<keyword id="KW-0328">Glycosyltransferase</keyword>
<keyword id="KW-0333">Golgi apparatus</keyword>
<keyword id="KW-0472">Membrane</keyword>
<keyword id="KW-1185">Reference proteome</keyword>
<keyword id="KW-0735">Signal-anchor</keyword>
<keyword id="KW-0808">Transferase</keyword>
<keyword id="KW-0812">Transmembrane</keyword>
<keyword id="KW-1133">Transmembrane helix</keyword>
<evidence type="ECO:0000250" key="1"/>
<evidence type="ECO:0000255" key="2"/>
<evidence type="ECO:0000269" key="3">
    <source>
    </source>
</evidence>
<evidence type="ECO:0000305" key="4"/>
<gene>
    <name type="primary">GAUT9</name>
    <name type="ordered locus">At3g02350</name>
    <name type="ORF">F11A12.4</name>
    <name type="ORF">F11A12_103</name>
</gene>
<organism>
    <name type="scientific">Arabidopsis thaliana</name>
    <name type="common">Mouse-ear cress</name>
    <dbReference type="NCBI Taxonomy" id="3702"/>
    <lineage>
        <taxon>Eukaryota</taxon>
        <taxon>Viridiplantae</taxon>
        <taxon>Streptophyta</taxon>
        <taxon>Embryophyta</taxon>
        <taxon>Tracheophyta</taxon>
        <taxon>Spermatophyta</taxon>
        <taxon>Magnoliopsida</taxon>
        <taxon>eudicotyledons</taxon>
        <taxon>Gunneridae</taxon>
        <taxon>Pentapetalae</taxon>
        <taxon>rosids</taxon>
        <taxon>malvids</taxon>
        <taxon>Brassicales</taxon>
        <taxon>Brassicaceae</taxon>
        <taxon>Camelineae</taxon>
        <taxon>Arabidopsis</taxon>
    </lineage>
</organism>
<feature type="chain" id="PRO_0000206063" description="Probable galacturonosyltransferase 9">
    <location>
        <begin position="1"/>
        <end position="561"/>
    </location>
</feature>
<feature type="topological domain" description="Cytoplasmic" evidence="2">
    <location>
        <begin position="1"/>
        <end position="27"/>
    </location>
</feature>
<feature type="transmembrane region" description="Helical; Signal-anchor for type II membrane protein" evidence="2">
    <location>
        <begin position="28"/>
        <end position="48"/>
    </location>
</feature>
<feature type="topological domain" description="Lumenal" evidence="2">
    <location>
        <begin position="49"/>
        <end position="561"/>
    </location>
</feature>
<feature type="glycosylation site" description="N-linked (GlcNAc...) asparagine" evidence="2">
    <location>
        <position position="124"/>
    </location>
</feature>
<feature type="glycosylation site" description="N-linked (GlcNAc...) asparagine" evidence="2">
    <location>
        <position position="320"/>
    </location>
</feature>
<feature type="glycosylation site" description="N-linked (GlcNAc...) asparagine" evidence="2">
    <location>
        <position position="346"/>
    </location>
</feature>
<feature type="glycosylation site" description="N-linked (GlcNAc...) asparagine" evidence="2">
    <location>
        <position position="426"/>
    </location>
</feature>